<comment type="function">
    <text evidence="2">Cell wall formation.</text>
</comment>
<comment type="catalytic activity">
    <reaction evidence="2">
        <text>2 D-alanine + ATP = D-alanyl-D-alanine + ADP + phosphate + H(+)</text>
        <dbReference type="Rhea" id="RHEA:11224"/>
        <dbReference type="ChEBI" id="CHEBI:15378"/>
        <dbReference type="ChEBI" id="CHEBI:30616"/>
        <dbReference type="ChEBI" id="CHEBI:43474"/>
        <dbReference type="ChEBI" id="CHEBI:57416"/>
        <dbReference type="ChEBI" id="CHEBI:57822"/>
        <dbReference type="ChEBI" id="CHEBI:456216"/>
        <dbReference type="EC" id="6.3.2.4"/>
    </reaction>
</comment>
<comment type="cofactor">
    <cofactor evidence="1">
        <name>Mg(2+)</name>
        <dbReference type="ChEBI" id="CHEBI:18420"/>
    </cofactor>
    <cofactor evidence="1">
        <name>Mn(2+)</name>
        <dbReference type="ChEBI" id="CHEBI:29035"/>
    </cofactor>
    <text evidence="1">Binds 2 magnesium or manganese ions per subunit.</text>
</comment>
<comment type="pathway">
    <text evidence="2">Cell wall biogenesis; peptidoglycan biosynthesis.</text>
</comment>
<comment type="subcellular location">
    <subcellularLocation>
        <location evidence="2">Cytoplasm</location>
    </subcellularLocation>
</comment>
<comment type="similarity">
    <text evidence="2">Belongs to the D-alanine--D-alanine ligase family.</text>
</comment>
<feature type="chain" id="PRO_1000091205" description="D-alanine--D-alanine ligase">
    <location>
        <begin position="1"/>
        <end position="361"/>
    </location>
</feature>
<feature type="domain" description="ATP-grasp" evidence="2">
    <location>
        <begin position="144"/>
        <end position="350"/>
    </location>
</feature>
<feature type="binding site" evidence="2">
    <location>
        <begin position="177"/>
        <end position="232"/>
    </location>
    <ligand>
        <name>ATP</name>
        <dbReference type="ChEBI" id="CHEBI:30616"/>
    </ligand>
</feature>
<feature type="binding site" evidence="2">
    <location>
        <position position="303"/>
    </location>
    <ligand>
        <name>Mg(2+)</name>
        <dbReference type="ChEBI" id="CHEBI:18420"/>
        <label>1</label>
    </ligand>
</feature>
<feature type="binding site" evidence="2">
    <location>
        <position position="317"/>
    </location>
    <ligand>
        <name>Mg(2+)</name>
        <dbReference type="ChEBI" id="CHEBI:18420"/>
        <label>1</label>
    </ligand>
</feature>
<feature type="binding site" evidence="2">
    <location>
        <position position="317"/>
    </location>
    <ligand>
        <name>Mg(2+)</name>
        <dbReference type="ChEBI" id="CHEBI:18420"/>
        <label>2</label>
    </ligand>
</feature>
<feature type="binding site" evidence="2">
    <location>
        <position position="319"/>
    </location>
    <ligand>
        <name>Mg(2+)</name>
        <dbReference type="ChEBI" id="CHEBI:18420"/>
        <label>2</label>
    </ligand>
</feature>
<reference key="1">
    <citation type="submission" date="2007-03" db="EMBL/GenBank/DDBJ databases">
        <title>Complete sequence of Prosthecochloris vibrioformis DSM 265.</title>
        <authorList>
            <consortium name="US DOE Joint Genome Institute"/>
            <person name="Copeland A."/>
            <person name="Lucas S."/>
            <person name="Lapidus A."/>
            <person name="Barry K."/>
            <person name="Detter J.C."/>
            <person name="Glavina del Rio T."/>
            <person name="Hammon N."/>
            <person name="Israni S."/>
            <person name="Pitluck S."/>
            <person name="Schmutz J."/>
            <person name="Larimer F."/>
            <person name="Land M."/>
            <person name="Hauser L."/>
            <person name="Mikhailova N."/>
            <person name="Li T."/>
            <person name="Overmann J."/>
            <person name="Schuster S.C."/>
            <person name="Bryant D.A."/>
            <person name="Richardson P."/>
        </authorList>
    </citation>
    <scope>NUCLEOTIDE SEQUENCE [LARGE SCALE GENOMIC DNA]</scope>
    <source>
        <strain>DSM 265 / 1930</strain>
    </source>
</reference>
<gene>
    <name evidence="2" type="primary">ddl</name>
    <name type="ordered locus">Cvib_0722</name>
</gene>
<accession>A4SE28</accession>
<organism>
    <name type="scientific">Chlorobium phaeovibrioides (strain DSM 265 / 1930)</name>
    <name type="common">Prosthecochloris vibrioformis (strain DSM 265)</name>
    <dbReference type="NCBI Taxonomy" id="290318"/>
    <lineage>
        <taxon>Bacteria</taxon>
        <taxon>Pseudomonadati</taxon>
        <taxon>Chlorobiota</taxon>
        <taxon>Chlorobiia</taxon>
        <taxon>Chlorobiales</taxon>
        <taxon>Chlorobiaceae</taxon>
        <taxon>Chlorobium/Pelodictyon group</taxon>
        <taxon>Chlorobium</taxon>
    </lineage>
</organism>
<evidence type="ECO:0000250" key="1"/>
<evidence type="ECO:0000255" key="2">
    <source>
        <dbReference type="HAMAP-Rule" id="MF_00047"/>
    </source>
</evidence>
<protein>
    <recommendedName>
        <fullName evidence="2">D-alanine--D-alanine ligase</fullName>
        <ecNumber evidence="2">6.3.2.4</ecNumber>
    </recommendedName>
    <alternativeName>
        <fullName evidence="2">D-Ala-D-Ala ligase</fullName>
    </alternativeName>
    <alternativeName>
        <fullName evidence="2">D-alanylalanine synthetase</fullName>
    </alternativeName>
</protein>
<proteinExistence type="inferred from homology"/>
<sequence>MKQVTVALLFGGRSAEHEISIISAQSVARHINPDHYRVVPIYITRNGRWYSEGIASSILELDIAALIRKSGTAAASLKLQEMVLASGQQPFSFTFAGIDIAFPILHGSYGEDGRIQGFLDTVAIPYTGCGVTASALTMDKALSKLCVSEAGIAVAPGVTVLAGDWEKSPEQILSSIPETLIYPVFVKPAHLGSSVGISKVSVQGELPEALAHACNLDTKVLIEQAMHGKEIEVAVLGNNDPIASACGEIEPGSDFYDYDDKYIHNTAKLFIPARLPEELSRRVQADALTAYRALGCRGMARVDFFVDEKSGQVVFNEINTIPGFTDISMYPQLMEAAGIAFPELCDRLLQLALEPEQPAKT</sequence>
<dbReference type="EC" id="6.3.2.4" evidence="2"/>
<dbReference type="EMBL" id="CP000607">
    <property type="protein sequence ID" value="ABP36737.1"/>
    <property type="molecule type" value="Genomic_DNA"/>
</dbReference>
<dbReference type="SMR" id="A4SE28"/>
<dbReference type="STRING" id="290318.Cvib_0722"/>
<dbReference type="KEGG" id="pvi:Cvib_0722"/>
<dbReference type="eggNOG" id="COG1181">
    <property type="taxonomic scope" value="Bacteria"/>
</dbReference>
<dbReference type="HOGENOM" id="CLU_039268_0_0_10"/>
<dbReference type="OrthoDB" id="9813261at2"/>
<dbReference type="UniPathway" id="UPA00219"/>
<dbReference type="GO" id="GO:0005829">
    <property type="term" value="C:cytosol"/>
    <property type="evidence" value="ECO:0007669"/>
    <property type="project" value="TreeGrafter"/>
</dbReference>
<dbReference type="GO" id="GO:0005524">
    <property type="term" value="F:ATP binding"/>
    <property type="evidence" value="ECO:0007669"/>
    <property type="project" value="UniProtKB-KW"/>
</dbReference>
<dbReference type="GO" id="GO:0008716">
    <property type="term" value="F:D-alanine-D-alanine ligase activity"/>
    <property type="evidence" value="ECO:0007669"/>
    <property type="project" value="UniProtKB-UniRule"/>
</dbReference>
<dbReference type="GO" id="GO:0046872">
    <property type="term" value="F:metal ion binding"/>
    <property type="evidence" value="ECO:0007669"/>
    <property type="project" value="UniProtKB-KW"/>
</dbReference>
<dbReference type="GO" id="GO:0071555">
    <property type="term" value="P:cell wall organization"/>
    <property type="evidence" value="ECO:0007669"/>
    <property type="project" value="UniProtKB-KW"/>
</dbReference>
<dbReference type="GO" id="GO:0009252">
    <property type="term" value="P:peptidoglycan biosynthetic process"/>
    <property type="evidence" value="ECO:0007669"/>
    <property type="project" value="UniProtKB-UniRule"/>
</dbReference>
<dbReference type="GO" id="GO:0008360">
    <property type="term" value="P:regulation of cell shape"/>
    <property type="evidence" value="ECO:0007669"/>
    <property type="project" value="UniProtKB-KW"/>
</dbReference>
<dbReference type="FunFam" id="3.30.1490.20:FF:000007">
    <property type="entry name" value="D-alanine--D-alanine ligase"/>
    <property type="match status" value="1"/>
</dbReference>
<dbReference type="FunFam" id="3.30.470.20:FF:000008">
    <property type="entry name" value="D-alanine--D-alanine ligase"/>
    <property type="match status" value="1"/>
</dbReference>
<dbReference type="Gene3D" id="3.40.50.20">
    <property type="match status" value="1"/>
</dbReference>
<dbReference type="Gene3D" id="3.30.1490.20">
    <property type="entry name" value="ATP-grasp fold, A domain"/>
    <property type="match status" value="1"/>
</dbReference>
<dbReference type="Gene3D" id="3.30.470.20">
    <property type="entry name" value="ATP-grasp fold, B domain"/>
    <property type="match status" value="1"/>
</dbReference>
<dbReference type="HAMAP" id="MF_00047">
    <property type="entry name" value="Dala_Dala_lig"/>
    <property type="match status" value="1"/>
</dbReference>
<dbReference type="InterPro" id="IPR011761">
    <property type="entry name" value="ATP-grasp"/>
</dbReference>
<dbReference type="InterPro" id="IPR013815">
    <property type="entry name" value="ATP_grasp_subdomain_1"/>
</dbReference>
<dbReference type="InterPro" id="IPR000291">
    <property type="entry name" value="D-Ala_lig_Van_CS"/>
</dbReference>
<dbReference type="InterPro" id="IPR005905">
    <property type="entry name" value="D_ala_D_ala"/>
</dbReference>
<dbReference type="InterPro" id="IPR011095">
    <property type="entry name" value="Dala_Dala_lig_C"/>
</dbReference>
<dbReference type="InterPro" id="IPR011127">
    <property type="entry name" value="Dala_Dala_lig_N"/>
</dbReference>
<dbReference type="InterPro" id="IPR016185">
    <property type="entry name" value="PreATP-grasp_dom_sf"/>
</dbReference>
<dbReference type="NCBIfam" id="TIGR01205">
    <property type="entry name" value="D_ala_D_alaTIGR"/>
    <property type="match status" value="1"/>
</dbReference>
<dbReference type="NCBIfam" id="NF002378">
    <property type="entry name" value="PRK01372.1"/>
    <property type="match status" value="1"/>
</dbReference>
<dbReference type="NCBIfam" id="NF002528">
    <property type="entry name" value="PRK01966.1-4"/>
    <property type="match status" value="1"/>
</dbReference>
<dbReference type="PANTHER" id="PTHR23132">
    <property type="entry name" value="D-ALANINE--D-ALANINE LIGASE"/>
    <property type="match status" value="1"/>
</dbReference>
<dbReference type="PANTHER" id="PTHR23132:SF25">
    <property type="entry name" value="D-ALANINE--D-ALANINE LIGASE A"/>
    <property type="match status" value="1"/>
</dbReference>
<dbReference type="Pfam" id="PF07478">
    <property type="entry name" value="Dala_Dala_lig_C"/>
    <property type="match status" value="1"/>
</dbReference>
<dbReference type="Pfam" id="PF01820">
    <property type="entry name" value="Dala_Dala_lig_N"/>
    <property type="match status" value="1"/>
</dbReference>
<dbReference type="PIRSF" id="PIRSF039102">
    <property type="entry name" value="Ddl/VanB"/>
    <property type="match status" value="1"/>
</dbReference>
<dbReference type="SUPFAM" id="SSF56059">
    <property type="entry name" value="Glutathione synthetase ATP-binding domain-like"/>
    <property type="match status" value="1"/>
</dbReference>
<dbReference type="SUPFAM" id="SSF52440">
    <property type="entry name" value="PreATP-grasp domain"/>
    <property type="match status" value="1"/>
</dbReference>
<dbReference type="PROSITE" id="PS50975">
    <property type="entry name" value="ATP_GRASP"/>
    <property type="match status" value="1"/>
</dbReference>
<dbReference type="PROSITE" id="PS00843">
    <property type="entry name" value="DALA_DALA_LIGASE_1"/>
    <property type="match status" value="1"/>
</dbReference>
<dbReference type="PROSITE" id="PS00844">
    <property type="entry name" value="DALA_DALA_LIGASE_2"/>
    <property type="match status" value="1"/>
</dbReference>
<name>DDL_CHLPM</name>
<keyword id="KW-0067">ATP-binding</keyword>
<keyword id="KW-0133">Cell shape</keyword>
<keyword id="KW-0961">Cell wall biogenesis/degradation</keyword>
<keyword id="KW-0963">Cytoplasm</keyword>
<keyword id="KW-0436">Ligase</keyword>
<keyword id="KW-0460">Magnesium</keyword>
<keyword id="KW-0464">Manganese</keyword>
<keyword id="KW-0479">Metal-binding</keyword>
<keyword id="KW-0547">Nucleotide-binding</keyword>
<keyword id="KW-0573">Peptidoglycan synthesis</keyword>